<proteinExistence type="inferred from homology"/>
<evidence type="ECO:0000255" key="1">
    <source>
        <dbReference type="HAMAP-Rule" id="MF_01405"/>
    </source>
</evidence>
<protein>
    <recommendedName>
        <fullName evidence="1">dITP/XTP pyrophosphatase</fullName>
        <ecNumber evidence="1">3.6.1.66</ecNumber>
    </recommendedName>
    <alternativeName>
        <fullName evidence="1">Non-canonical purine NTP pyrophosphatase</fullName>
    </alternativeName>
    <alternativeName>
        <fullName evidence="1">Non-standard purine NTP pyrophosphatase</fullName>
    </alternativeName>
    <alternativeName>
        <fullName evidence="1">Nucleoside-triphosphate diphosphatase</fullName>
    </alternativeName>
    <alternativeName>
        <fullName evidence="1">Nucleoside-triphosphate pyrophosphatase</fullName>
        <shortName evidence="1">NTPase</shortName>
    </alternativeName>
</protein>
<feature type="chain" id="PRO_1000215200" description="dITP/XTP pyrophosphatase">
    <location>
        <begin position="1"/>
        <end position="203"/>
    </location>
</feature>
<feature type="active site" description="Proton acceptor" evidence="1">
    <location>
        <position position="72"/>
    </location>
</feature>
<feature type="binding site" evidence="1">
    <location>
        <begin position="9"/>
        <end position="14"/>
    </location>
    <ligand>
        <name>substrate</name>
    </ligand>
</feature>
<feature type="binding site" evidence="1">
    <location>
        <position position="42"/>
    </location>
    <ligand>
        <name>Mg(2+)</name>
        <dbReference type="ChEBI" id="CHEBI:18420"/>
    </ligand>
</feature>
<feature type="binding site" evidence="1">
    <location>
        <position position="72"/>
    </location>
    <ligand>
        <name>Mg(2+)</name>
        <dbReference type="ChEBI" id="CHEBI:18420"/>
    </ligand>
</feature>
<feature type="binding site" evidence="1">
    <location>
        <position position="73"/>
    </location>
    <ligand>
        <name>substrate</name>
    </ligand>
</feature>
<feature type="binding site" evidence="1">
    <location>
        <begin position="161"/>
        <end position="164"/>
    </location>
    <ligand>
        <name>substrate</name>
    </ligand>
</feature>
<feature type="binding site" evidence="1">
    <location>
        <position position="184"/>
    </location>
    <ligand>
        <name>substrate</name>
    </ligand>
</feature>
<feature type="binding site" evidence="1">
    <location>
        <begin position="189"/>
        <end position="190"/>
    </location>
    <ligand>
        <name>substrate</name>
    </ligand>
</feature>
<comment type="function">
    <text evidence="1">Pyrophosphatase that catalyzes the hydrolysis of nucleoside triphosphates to their monophosphate derivatives, with a high preference for the non-canonical purine nucleotides XTP (xanthosine triphosphate), dITP (deoxyinosine triphosphate) and ITP. Seems to function as a house-cleaning enzyme that removes non-canonical purine nucleotides from the nucleotide pool, thus preventing their incorporation into DNA/RNA and avoiding chromosomal lesions.</text>
</comment>
<comment type="catalytic activity">
    <reaction evidence="1">
        <text>XTP + H2O = XMP + diphosphate + H(+)</text>
        <dbReference type="Rhea" id="RHEA:28610"/>
        <dbReference type="ChEBI" id="CHEBI:15377"/>
        <dbReference type="ChEBI" id="CHEBI:15378"/>
        <dbReference type="ChEBI" id="CHEBI:33019"/>
        <dbReference type="ChEBI" id="CHEBI:57464"/>
        <dbReference type="ChEBI" id="CHEBI:61314"/>
        <dbReference type="EC" id="3.6.1.66"/>
    </reaction>
</comment>
<comment type="catalytic activity">
    <reaction evidence="1">
        <text>dITP + H2O = dIMP + diphosphate + H(+)</text>
        <dbReference type="Rhea" id="RHEA:28342"/>
        <dbReference type="ChEBI" id="CHEBI:15377"/>
        <dbReference type="ChEBI" id="CHEBI:15378"/>
        <dbReference type="ChEBI" id="CHEBI:33019"/>
        <dbReference type="ChEBI" id="CHEBI:61194"/>
        <dbReference type="ChEBI" id="CHEBI:61382"/>
        <dbReference type="EC" id="3.6.1.66"/>
    </reaction>
</comment>
<comment type="catalytic activity">
    <reaction evidence="1">
        <text>ITP + H2O = IMP + diphosphate + H(+)</text>
        <dbReference type="Rhea" id="RHEA:29399"/>
        <dbReference type="ChEBI" id="CHEBI:15377"/>
        <dbReference type="ChEBI" id="CHEBI:15378"/>
        <dbReference type="ChEBI" id="CHEBI:33019"/>
        <dbReference type="ChEBI" id="CHEBI:58053"/>
        <dbReference type="ChEBI" id="CHEBI:61402"/>
        <dbReference type="EC" id="3.6.1.66"/>
    </reaction>
</comment>
<comment type="cofactor">
    <cofactor evidence="1">
        <name>Mg(2+)</name>
        <dbReference type="ChEBI" id="CHEBI:18420"/>
    </cofactor>
    <text evidence="1">Binds 1 Mg(2+) ion per subunit.</text>
</comment>
<comment type="subunit">
    <text evidence="1">Homodimer.</text>
</comment>
<comment type="similarity">
    <text evidence="1">Belongs to the HAM1 NTPase family.</text>
</comment>
<organism>
    <name type="scientific">Acidobacterium capsulatum (strain ATCC 51196 / DSM 11244 / BCRC 80197 / JCM 7670 / NBRC 15755 / NCIMB 13165 / 161)</name>
    <dbReference type="NCBI Taxonomy" id="240015"/>
    <lineage>
        <taxon>Bacteria</taxon>
        <taxon>Pseudomonadati</taxon>
        <taxon>Acidobacteriota</taxon>
        <taxon>Terriglobia</taxon>
        <taxon>Terriglobales</taxon>
        <taxon>Acidobacteriaceae</taxon>
        <taxon>Acidobacterium</taxon>
    </lineage>
</organism>
<name>IXTPA_ACIC5</name>
<accession>C1F8I0</accession>
<gene>
    <name type="ordered locus">ACP_0104</name>
</gene>
<sequence>MALTLYVASSNAGKLRDFRVAAGHTATEILPLPGLAEIDAPEETGTTFAENARLKAEFYSRCRPGGLVLADDSGLEVRALGLLPGVRSARFAEDAEYLPGSPLSADERNNLLLMDRMRGVEDRAGRYVCVLSVARDGVEIASAEGEVAGEILGVPQGTGGFGYDPLFYLPELEKTMAEIDLETKLRLSHRGAALRVLLARLPG</sequence>
<dbReference type="EC" id="3.6.1.66" evidence="1"/>
<dbReference type="EMBL" id="CP001472">
    <property type="protein sequence ID" value="ACO33253.1"/>
    <property type="molecule type" value="Genomic_DNA"/>
</dbReference>
<dbReference type="RefSeq" id="WP_012680512.1">
    <property type="nucleotide sequence ID" value="NC_012483.1"/>
</dbReference>
<dbReference type="SMR" id="C1F8I0"/>
<dbReference type="FunCoup" id="C1F8I0">
    <property type="interactions" value="523"/>
</dbReference>
<dbReference type="STRING" id="240015.ACP_0104"/>
<dbReference type="KEGG" id="aca:ACP_0104"/>
<dbReference type="eggNOG" id="COG0127">
    <property type="taxonomic scope" value="Bacteria"/>
</dbReference>
<dbReference type="HOGENOM" id="CLU_082080_0_2_0"/>
<dbReference type="InParanoid" id="C1F8I0"/>
<dbReference type="OrthoDB" id="9807456at2"/>
<dbReference type="Proteomes" id="UP000002207">
    <property type="component" value="Chromosome"/>
</dbReference>
<dbReference type="GO" id="GO:0005829">
    <property type="term" value="C:cytosol"/>
    <property type="evidence" value="ECO:0007669"/>
    <property type="project" value="TreeGrafter"/>
</dbReference>
<dbReference type="GO" id="GO:0035870">
    <property type="term" value="F:dITP diphosphatase activity"/>
    <property type="evidence" value="ECO:0007669"/>
    <property type="project" value="RHEA"/>
</dbReference>
<dbReference type="GO" id="GO:0036220">
    <property type="term" value="F:ITP diphosphatase activity"/>
    <property type="evidence" value="ECO:0007669"/>
    <property type="project" value="UniProtKB-EC"/>
</dbReference>
<dbReference type="GO" id="GO:0046872">
    <property type="term" value="F:metal ion binding"/>
    <property type="evidence" value="ECO:0007669"/>
    <property type="project" value="UniProtKB-KW"/>
</dbReference>
<dbReference type="GO" id="GO:0000166">
    <property type="term" value="F:nucleotide binding"/>
    <property type="evidence" value="ECO:0007669"/>
    <property type="project" value="UniProtKB-KW"/>
</dbReference>
<dbReference type="GO" id="GO:0017111">
    <property type="term" value="F:ribonucleoside triphosphate phosphatase activity"/>
    <property type="evidence" value="ECO:0007669"/>
    <property type="project" value="InterPro"/>
</dbReference>
<dbReference type="GO" id="GO:0036222">
    <property type="term" value="F:XTP diphosphatase activity"/>
    <property type="evidence" value="ECO:0007669"/>
    <property type="project" value="RHEA"/>
</dbReference>
<dbReference type="GO" id="GO:0009117">
    <property type="term" value="P:nucleotide metabolic process"/>
    <property type="evidence" value="ECO:0007669"/>
    <property type="project" value="UniProtKB-KW"/>
</dbReference>
<dbReference type="GO" id="GO:0009146">
    <property type="term" value="P:purine nucleoside triphosphate catabolic process"/>
    <property type="evidence" value="ECO:0007669"/>
    <property type="project" value="UniProtKB-UniRule"/>
</dbReference>
<dbReference type="CDD" id="cd00515">
    <property type="entry name" value="HAM1"/>
    <property type="match status" value="1"/>
</dbReference>
<dbReference type="FunFam" id="3.90.950.10:FF:000001">
    <property type="entry name" value="dITP/XTP pyrophosphatase"/>
    <property type="match status" value="1"/>
</dbReference>
<dbReference type="Gene3D" id="3.90.950.10">
    <property type="match status" value="1"/>
</dbReference>
<dbReference type="HAMAP" id="MF_01405">
    <property type="entry name" value="Non_canon_purine_NTPase"/>
    <property type="match status" value="1"/>
</dbReference>
<dbReference type="InterPro" id="IPR020922">
    <property type="entry name" value="dITP/XTP_pyrophosphatase"/>
</dbReference>
<dbReference type="InterPro" id="IPR029001">
    <property type="entry name" value="ITPase-like_fam"/>
</dbReference>
<dbReference type="InterPro" id="IPR002637">
    <property type="entry name" value="RdgB/HAM1"/>
</dbReference>
<dbReference type="PANTHER" id="PTHR11067:SF9">
    <property type="entry name" value="INOSINE TRIPHOSPHATE PYROPHOSPHATASE"/>
    <property type="match status" value="1"/>
</dbReference>
<dbReference type="PANTHER" id="PTHR11067">
    <property type="entry name" value="INOSINE TRIPHOSPHATE PYROPHOSPHATASE/HAM1 PROTEIN"/>
    <property type="match status" value="1"/>
</dbReference>
<dbReference type="Pfam" id="PF01725">
    <property type="entry name" value="Ham1p_like"/>
    <property type="match status" value="1"/>
</dbReference>
<dbReference type="SUPFAM" id="SSF52972">
    <property type="entry name" value="ITPase-like"/>
    <property type="match status" value="1"/>
</dbReference>
<reference key="1">
    <citation type="journal article" date="2009" name="Appl. Environ. Microbiol.">
        <title>Three genomes from the phylum Acidobacteria provide insight into the lifestyles of these microorganisms in soils.</title>
        <authorList>
            <person name="Ward N.L."/>
            <person name="Challacombe J.F."/>
            <person name="Janssen P.H."/>
            <person name="Henrissat B."/>
            <person name="Coutinho P.M."/>
            <person name="Wu M."/>
            <person name="Xie G."/>
            <person name="Haft D.H."/>
            <person name="Sait M."/>
            <person name="Badger J."/>
            <person name="Barabote R.D."/>
            <person name="Bradley B."/>
            <person name="Brettin T.S."/>
            <person name="Brinkac L.M."/>
            <person name="Bruce D."/>
            <person name="Creasy T."/>
            <person name="Daugherty S.C."/>
            <person name="Davidsen T.M."/>
            <person name="DeBoy R.T."/>
            <person name="Detter J.C."/>
            <person name="Dodson R.J."/>
            <person name="Durkin A.S."/>
            <person name="Ganapathy A."/>
            <person name="Gwinn-Giglio M."/>
            <person name="Han C.S."/>
            <person name="Khouri H."/>
            <person name="Kiss H."/>
            <person name="Kothari S.P."/>
            <person name="Madupu R."/>
            <person name="Nelson K.E."/>
            <person name="Nelson W.C."/>
            <person name="Paulsen I."/>
            <person name="Penn K."/>
            <person name="Ren Q."/>
            <person name="Rosovitz M.J."/>
            <person name="Selengut J.D."/>
            <person name="Shrivastava S."/>
            <person name="Sullivan S.A."/>
            <person name="Tapia R."/>
            <person name="Thompson L.S."/>
            <person name="Watkins K.L."/>
            <person name="Yang Q."/>
            <person name="Yu C."/>
            <person name="Zafar N."/>
            <person name="Zhou L."/>
            <person name="Kuske C.R."/>
        </authorList>
    </citation>
    <scope>NUCLEOTIDE SEQUENCE [LARGE SCALE GENOMIC DNA]</scope>
    <source>
        <strain>ATCC 51196 / DSM 11244 / BCRC 80197 / JCM 7670 / NBRC 15755 / NCIMB 13165 / 161</strain>
    </source>
</reference>
<keyword id="KW-0378">Hydrolase</keyword>
<keyword id="KW-0460">Magnesium</keyword>
<keyword id="KW-0479">Metal-binding</keyword>
<keyword id="KW-0546">Nucleotide metabolism</keyword>
<keyword id="KW-0547">Nucleotide-binding</keyword>
<keyword id="KW-1185">Reference proteome</keyword>